<reference key="1">
    <citation type="journal article" date="2009" name="BMC Genomics">
        <title>The complete genome sequence of Staphylothermus marinus reveals differences in sulfur metabolism among heterotrophic Crenarchaeota.</title>
        <authorList>
            <person name="Anderson I.J."/>
            <person name="Dharmarajan L."/>
            <person name="Rodriguez J."/>
            <person name="Hooper S."/>
            <person name="Porat I."/>
            <person name="Ulrich L.E."/>
            <person name="Elkins J.G."/>
            <person name="Mavromatis K."/>
            <person name="Sun H."/>
            <person name="Land M."/>
            <person name="Lapidus A."/>
            <person name="Lucas S."/>
            <person name="Barry K."/>
            <person name="Huber H."/>
            <person name="Zhulin I.B."/>
            <person name="Whitman W.B."/>
            <person name="Mukhopadhyay B."/>
            <person name="Woese C."/>
            <person name="Bristow J."/>
            <person name="Kyrpides N."/>
        </authorList>
    </citation>
    <scope>NUCLEOTIDE SEQUENCE [LARGE SCALE GENOMIC DNA]</scope>
    <source>
        <strain>ATCC 43588 / DSM 3639 / JCM 9404 / F1</strain>
    </source>
</reference>
<reference key="2">
    <citation type="journal article" date="2009" name="Stand. Genomic Sci.">
        <title>Complete genome sequence of Staphylothermus marinus Stetter and Fiala 1986 type strain F1.</title>
        <authorList>
            <person name="Anderson I.J."/>
            <person name="Sun H."/>
            <person name="Lapidus A."/>
            <person name="Copeland A."/>
            <person name="Glavina Del Rio T."/>
            <person name="Tice H."/>
            <person name="Dalin E."/>
            <person name="Lucas S."/>
            <person name="Barry K."/>
            <person name="Land M."/>
            <person name="Richardson P."/>
            <person name="Huber H."/>
            <person name="Kyrpides N.C."/>
        </authorList>
    </citation>
    <scope>NUCLEOTIDE SEQUENCE [LARGE SCALE GENOMIC DNA]</scope>
    <source>
        <strain>ATCC 43588 / DSM 3639 / JCM 9404 / F1</strain>
    </source>
</reference>
<comment type="function">
    <text evidence="1">May function in recognizing stalled ribosomes, interact with stem-loop structures in stalled mRNA molecules, and effect endonucleolytic cleavage of the mRNA. May play a role in the release non-functional ribosomes and degradation of damaged mRNAs. Has endoribonuclease activity.</text>
</comment>
<comment type="cofactor">
    <cofactor evidence="1">
        <name>a divalent metal cation</name>
        <dbReference type="ChEBI" id="CHEBI:60240"/>
    </cofactor>
</comment>
<comment type="subunit">
    <text evidence="1">Monomer.</text>
</comment>
<comment type="subcellular location">
    <subcellularLocation>
        <location evidence="1">Cytoplasm</location>
    </subcellularLocation>
</comment>
<comment type="domain">
    <text evidence="1">The N-terminal domain has the RNA-binding Sm fold. It harbors the endoribonuclease activity.</text>
</comment>
<comment type="similarity">
    <text evidence="1">Belongs to the eukaryotic release factor 1 family. Pelota subfamily.</text>
</comment>
<organism>
    <name type="scientific">Staphylothermus marinus (strain ATCC 43588 / DSM 3639 / JCM 9404 / F1)</name>
    <dbReference type="NCBI Taxonomy" id="399550"/>
    <lineage>
        <taxon>Archaea</taxon>
        <taxon>Thermoproteota</taxon>
        <taxon>Thermoprotei</taxon>
        <taxon>Desulfurococcales</taxon>
        <taxon>Desulfurococcaceae</taxon>
        <taxon>Staphylothermus</taxon>
    </lineage>
</organism>
<evidence type="ECO:0000255" key="1">
    <source>
        <dbReference type="HAMAP-Rule" id="MF_01853"/>
    </source>
</evidence>
<name>PELO_STAMF</name>
<dbReference type="EC" id="3.1.-.-" evidence="1"/>
<dbReference type="EMBL" id="CP000575">
    <property type="protein sequence ID" value="ABN69987.1"/>
    <property type="molecule type" value="Genomic_DNA"/>
</dbReference>
<dbReference type="RefSeq" id="WP_011839178.1">
    <property type="nucleotide sequence ID" value="NC_009033.1"/>
</dbReference>
<dbReference type="SMR" id="A3DMX7"/>
<dbReference type="STRING" id="399550.Smar_0887"/>
<dbReference type="GeneID" id="4908044"/>
<dbReference type="KEGG" id="smr:Smar_0887"/>
<dbReference type="eggNOG" id="arCOG01741">
    <property type="taxonomic scope" value="Archaea"/>
</dbReference>
<dbReference type="HOGENOM" id="CLU_023334_3_1_2"/>
<dbReference type="OrthoDB" id="31300at2157"/>
<dbReference type="Proteomes" id="UP000000254">
    <property type="component" value="Chromosome"/>
</dbReference>
<dbReference type="GO" id="GO:0005737">
    <property type="term" value="C:cytoplasm"/>
    <property type="evidence" value="ECO:0007669"/>
    <property type="project" value="UniProtKB-SubCell"/>
</dbReference>
<dbReference type="GO" id="GO:0004519">
    <property type="term" value="F:endonuclease activity"/>
    <property type="evidence" value="ECO:0007669"/>
    <property type="project" value="UniProtKB-UniRule"/>
</dbReference>
<dbReference type="GO" id="GO:0046872">
    <property type="term" value="F:metal ion binding"/>
    <property type="evidence" value="ECO:0007669"/>
    <property type="project" value="UniProtKB-UniRule"/>
</dbReference>
<dbReference type="GO" id="GO:0070651">
    <property type="term" value="P:nonfunctional rRNA decay"/>
    <property type="evidence" value="ECO:0007669"/>
    <property type="project" value="TreeGrafter"/>
</dbReference>
<dbReference type="GO" id="GO:0070966">
    <property type="term" value="P:nuclear-transcribed mRNA catabolic process, no-go decay"/>
    <property type="evidence" value="ECO:0007669"/>
    <property type="project" value="InterPro"/>
</dbReference>
<dbReference type="GO" id="GO:0070481">
    <property type="term" value="P:nuclear-transcribed mRNA catabolic process, non-stop decay"/>
    <property type="evidence" value="ECO:0007669"/>
    <property type="project" value="InterPro"/>
</dbReference>
<dbReference type="GO" id="GO:0032790">
    <property type="term" value="P:ribosome disassembly"/>
    <property type="evidence" value="ECO:0007669"/>
    <property type="project" value="TreeGrafter"/>
</dbReference>
<dbReference type="GO" id="GO:0071025">
    <property type="term" value="P:RNA surveillance"/>
    <property type="evidence" value="ECO:0007669"/>
    <property type="project" value="InterPro"/>
</dbReference>
<dbReference type="Gene3D" id="3.30.1330.30">
    <property type="match status" value="1"/>
</dbReference>
<dbReference type="Gene3D" id="3.30.420.60">
    <property type="entry name" value="eRF1 domain 2"/>
    <property type="match status" value="1"/>
</dbReference>
<dbReference type="Gene3D" id="2.30.30.870">
    <property type="entry name" value="Pelota, domain A"/>
    <property type="match status" value="1"/>
</dbReference>
<dbReference type="HAMAP" id="MF_01853">
    <property type="entry name" value="PelO"/>
    <property type="match status" value="1"/>
</dbReference>
<dbReference type="InterPro" id="IPR042226">
    <property type="entry name" value="eFR1_2_sf"/>
</dbReference>
<dbReference type="InterPro" id="IPR005140">
    <property type="entry name" value="eRF1_1_Pelota"/>
</dbReference>
<dbReference type="InterPro" id="IPR005141">
    <property type="entry name" value="eRF1_2"/>
</dbReference>
<dbReference type="InterPro" id="IPR005142">
    <property type="entry name" value="eRF1_3"/>
</dbReference>
<dbReference type="InterPro" id="IPR038069">
    <property type="entry name" value="Pelota/DOM34_N"/>
</dbReference>
<dbReference type="InterPro" id="IPR023521">
    <property type="entry name" value="Pelota_arc"/>
</dbReference>
<dbReference type="InterPro" id="IPR029064">
    <property type="entry name" value="Ribosomal_eL30-like_sf"/>
</dbReference>
<dbReference type="InterPro" id="IPR004405">
    <property type="entry name" value="Transl-rel_pelota"/>
</dbReference>
<dbReference type="NCBIfam" id="TIGR00111">
    <property type="entry name" value="pelota"/>
    <property type="match status" value="1"/>
</dbReference>
<dbReference type="PANTHER" id="PTHR10853">
    <property type="entry name" value="PELOTA"/>
    <property type="match status" value="1"/>
</dbReference>
<dbReference type="PANTHER" id="PTHR10853:SF0">
    <property type="entry name" value="PROTEIN PELOTA HOMOLOG"/>
    <property type="match status" value="1"/>
</dbReference>
<dbReference type="Pfam" id="PF03463">
    <property type="entry name" value="eRF1_1"/>
    <property type="match status" value="1"/>
</dbReference>
<dbReference type="Pfam" id="PF03464">
    <property type="entry name" value="eRF1_2"/>
    <property type="match status" value="1"/>
</dbReference>
<dbReference type="Pfam" id="PF03465">
    <property type="entry name" value="eRF1_3"/>
    <property type="match status" value="1"/>
</dbReference>
<dbReference type="SMART" id="SM01194">
    <property type="entry name" value="eRF1_1"/>
    <property type="match status" value="1"/>
</dbReference>
<dbReference type="SUPFAM" id="SSF159065">
    <property type="entry name" value="Dom34/Pelota N-terminal domain-like"/>
    <property type="match status" value="1"/>
</dbReference>
<dbReference type="SUPFAM" id="SSF55315">
    <property type="entry name" value="L30e-like"/>
    <property type="match status" value="1"/>
</dbReference>
<dbReference type="SUPFAM" id="SSF53137">
    <property type="entry name" value="Translational machinery components"/>
    <property type="match status" value="1"/>
</dbReference>
<proteinExistence type="inferred from homology"/>
<keyword id="KW-0963">Cytoplasm</keyword>
<keyword id="KW-0255">Endonuclease</keyword>
<keyword id="KW-0378">Hydrolase</keyword>
<keyword id="KW-0479">Metal-binding</keyword>
<keyword id="KW-0540">Nuclease</keyword>
<keyword id="KW-1185">Reference proteome</keyword>
<sequence length="356" mass="40899">MKILEKDLRKGYLKILPEDQDDLWALYNIIKPLDRVTATTSRDIKHGETSSSRRIPMTLTIEVKTLEFQPFTERLRIRGIVVEGPERYGVKGHYHTLNIEPGKPLIIWKEKWSENELEIISRFTSRKQKVLLATFDYDEAAIALLTEQGIRLLEEFTSNIPGKREPVLFQKGLEKYLSSIAEKILDYINKFQVDIVVIASPGDLQKRVARIIKEKKPVNIITDTVSIGGQSGIRELLRRDSVREAVKETNIIKAQRILDEFHKNLSKNPDMVAYGIDDVEYAVKYNAVDKLLVSEELLRIYDEEVRRRVSSILNEAYKRRAEIIIVPHNSDVGLEVEGLGGIVALLRYPLKKPLNN</sequence>
<feature type="chain" id="PRO_0000361821" description="Protein pelota homolog">
    <location>
        <begin position="1"/>
        <end position="356"/>
    </location>
</feature>
<gene>
    <name evidence="1" type="primary">pelA</name>
    <name type="ordered locus">Smar_0887</name>
</gene>
<protein>
    <recommendedName>
        <fullName evidence="1">Protein pelota homolog</fullName>
        <ecNumber evidence="1">3.1.-.-</ecNumber>
    </recommendedName>
</protein>
<accession>A3DMX7</accession>